<name>APAH_ECTM1</name>
<accession>A4XZJ6</accession>
<protein>
    <recommendedName>
        <fullName evidence="1">Bis(5'-nucleosyl)-tetraphosphatase, symmetrical</fullName>
        <ecNumber evidence="1">3.6.1.41</ecNumber>
    </recommendedName>
    <alternativeName>
        <fullName evidence="1">Ap4A hydrolase</fullName>
    </alternativeName>
    <alternativeName>
        <fullName evidence="1">Diadenosine 5',5'''-P1,P4-tetraphosphate pyrophosphohydrolase</fullName>
    </alternativeName>
    <alternativeName>
        <fullName evidence="1">Diadenosine tetraphosphatase</fullName>
    </alternativeName>
</protein>
<feature type="chain" id="PRO_1000012079" description="Bis(5'-nucleosyl)-tetraphosphatase, symmetrical">
    <location>
        <begin position="1"/>
        <end position="272"/>
    </location>
</feature>
<evidence type="ECO:0000255" key="1">
    <source>
        <dbReference type="HAMAP-Rule" id="MF_00199"/>
    </source>
</evidence>
<dbReference type="EC" id="3.6.1.41" evidence="1"/>
<dbReference type="EMBL" id="CP000680">
    <property type="protein sequence ID" value="ABP86762.1"/>
    <property type="molecule type" value="Genomic_DNA"/>
</dbReference>
<dbReference type="SMR" id="A4XZJ6"/>
<dbReference type="STRING" id="399739.Pmen_4015"/>
<dbReference type="KEGG" id="pmy:Pmen_4015"/>
<dbReference type="PATRIC" id="fig|399739.8.peg.4068"/>
<dbReference type="eggNOG" id="COG0639">
    <property type="taxonomic scope" value="Bacteria"/>
</dbReference>
<dbReference type="HOGENOM" id="CLU_056184_2_0_6"/>
<dbReference type="OrthoDB" id="9807890at2"/>
<dbReference type="GO" id="GO:0008803">
    <property type="term" value="F:bis(5'-nucleosyl)-tetraphosphatase (symmetrical) activity"/>
    <property type="evidence" value="ECO:0007669"/>
    <property type="project" value="UniProtKB-UniRule"/>
</dbReference>
<dbReference type="CDD" id="cd07422">
    <property type="entry name" value="MPP_ApaH"/>
    <property type="match status" value="1"/>
</dbReference>
<dbReference type="Gene3D" id="3.60.21.10">
    <property type="match status" value="1"/>
</dbReference>
<dbReference type="HAMAP" id="MF_00199">
    <property type="entry name" value="ApaH"/>
    <property type="match status" value="1"/>
</dbReference>
<dbReference type="InterPro" id="IPR004617">
    <property type="entry name" value="ApaH"/>
</dbReference>
<dbReference type="InterPro" id="IPR004843">
    <property type="entry name" value="Calcineurin-like_PHP_ApaH"/>
</dbReference>
<dbReference type="InterPro" id="IPR029052">
    <property type="entry name" value="Metallo-depent_PP-like"/>
</dbReference>
<dbReference type="NCBIfam" id="TIGR00668">
    <property type="entry name" value="apaH"/>
    <property type="match status" value="1"/>
</dbReference>
<dbReference type="NCBIfam" id="NF001204">
    <property type="entry name" value="PRK00166.1"/>
    <property type="match status" value="1"/>
</dbReference>
<dbReference type="PANTHER" id="PTHR40942">
    <property type="match status" value="1"/>
</dbReference>
<dbReference type="PANTHER" id="PTHR40942:SF4">
    <property type="entry name" value="CYTOCHROME C5"/>
    <property type="match status" value="1"/>
</dbReference>
<dbReference type="Pfam" id="PF00149">
    <property type="entry name" value="Metallophos"/>
    <property type="match status" value="1"/>
</dbReference>
<dbReference type="PIRSF" id="PIRSF000903">
    <property type="entry name" value="B5n-ttraPtase_sm"/>
    <property type="match status" value="1"/>
</dbReference>
<dbReference type="SUPFAM" id="SSF56300">
    <property type="entry name" value="Metallo-dependent phosphatases"/>
    <property type="match status" value="1"/>
</dbReference>
<sequence>MAVYAVGDLQGCLQPLKCLLEQVAFDPAQDQLWLVGDLVNRGPQSLETLRFLYSIRHALTCVLGNHDLHLLAVAHNIERLKKGDTLREILDAPDRDDLLDWLRLQKLVHHDAERQITLVHAGIPPQWSLAKALKRAAEVEEVLRDDARLPLFLDGMYGNEPAKWNKDLHGVTRLRVITNYFTRMRFCTADGTLDLKSKEGVGSAPPGFAPWFSHPQRKMRGEKIIFGHWAALDGNCQEPGLYALDTGCVWGGAMTLLNVDSGALHRCTCPKQ</sequence>
<keyword id="KW-0378">Hydrolase</keyword>
<proteinExistence type="inferred from homology"/>
<reference key="1">
    <citation type="submission" date="2007-04" db="EMBL/GenBank/DDBJ databases">
        <title>Complete sequence of Pseudomonas mendocina ymp.</title>
        <authorList>
            <consortium name="US DOE Joint Genome Institute"/>
            <person name="Copeland A."/>
            <person name="Lucas S."/>
            <person name="Lapidus A."/>
            <person name="Barry K."/>
            <person name="Glavina del Rio T."/>
            <person name="Dalin E."/>
            <person name="Tice H."/>
            <person name="Pitluck S."/>
            <person name="Kiss H."/>
            <person name="Brettin T."/>
            <person name="Detter J.C."/>
            <person name="Bruce D."/>
            <person name="Han C."/>
            <person name="Schmutz J."/>
            <person name="Larimer F."/>
            <person name="Land M."/>
            <person name="Hauser L."/>
            <person name="Kyrpides N."/>
            <person name="Mikhailova N."/>
            <person name="Hersman L."/>
            <person name="Dubois J."/>
            <person name="Maurice P."/>
            <person name="Richardson P."/>
        </authorList>
    </citation>
    <scope>NUCLEOTIDE SEQUENCE [LARGE SCALE GENOMIC DNA]</scope>
    <source>
        <strain>ymp</strain>
    </source>
</reference>
<gene>
    <name evidence="1" type="primary">apaH</name>
    <name type="ordered locus">Pmen_4015</name>
</gene>
<comment type="function">
    <text evidence="1">Hydrolyzes diadenosine 5',5'''-P1,P4-tetraphosphate to yield ADP.</text>
</comment>
<comment type="catalytic activity">
    <reaction evidence="1">
        <text>P(1),P(4)-bis(5'-adenosyl) tetraphosphate + H2O = 2 ADP + 2 H(+)</text>
        <dbReference type="Rhea" id="RHEA:24252"/>
        <dbReference type="ChEBI" id="CHEBI:15377"/>
        <dbReference type="ChEBI" id="CHEBI:15378"/>
        <dbReference type="ChEBI" id="CHEBI:58141"/>
        <dbReference type="ChEBI" id="CHEBI:456216"/>
        <dbReference type="EC" id="3.6.1.41"/>
    </reaction>
</comment>
<comment type="similarity">
    <text evidence="1">Belongs to the Ap4A hydrolase family.</text>
</comment>
<organism>
    <name type="scientific">Ectopseudomonas mendocina (strain ymp)</name>
    <name type="common">Pseudomonas mendocina</name>
    <dbReference type="NCBI Taxonomy" id="399739"/>
    <lineage>
        <taxon>Bacteria</taxon>
        <taxon>Pseudomonadati</taxon>
        <taxon>Pseudomonadota</taxon>
        <taxon>Gammaproteobacteria</taxon>
        <taxon>Pseudomonadales</taxon>
        <taxon>Pseudomonadaceae</taxon>
        <taxon>Ectopseudomonas</taxon>
    </lineage>
</organism>